<keyword id="KW-0002">3D-structure</keyword>
<keyword id="KW-0007">Acetylation</keyword>
<keyword id="KW-0009">Actin-binding</keyword>
<keyword id="KW-0025">Alternative splicing</keyword>
<keyword id="KW-0037">Angiogenesis</keyword>
<keyword id="KW-0130">Cell adhesion</keyword>
<keyword id="KW-0965">Cell junction</keyword>
<keyword id="KW-1003">Cell membrane</keyword>
<keyword id="KW-0133">Cell shape</keyword>
<keyword id="KW-0145">Chemotaxis</keyword>
<keyword id="KW-0970">Cilium biogenesis/degradation</keyword>
<keyword id="KW-0963">Cytoplasm</keyword>
<keyword id="KW-0206">Cytoskeleton</keyword>
<keyword id="KW-0903">Direct protein sequencing</keyword>
<keyword id="KW-0472">Membrane</keyword>
<keyword id="KW-0597">Phosphoprotein</keyword>
<keyword id="KW-1267">Proteomics identification</keyword>
<keyword id="KW-1185">Reference proteome</keyword>
<keyword id="KW-0677">Repeat</keyword>
<name>PARVA_HUMAN</name>
<reference key="1">
    <citation type="journal article" date="2001" name="J. Cell Sci.">
        <title>Parvin, a 42 kDa focal adhesion protein, related to the alpha-actinin superfamily.</title>
        <authorList>
            <person name="Olski T.M."/>
            <person name="Noegel A.A."/>
            <person name="Korenbaum E."/>
        </authorList>
    </citation>
    <scope>NUCLEOTIDE SEQUENCE [MRNA] (ISOFORM 1)</scope>
</reference>
<reference key="2">
    <citation type="journal article" date="2001" name="J. Cell Biol.">
        <title>A new focal adhesion protein that interacts with integrin-linked kinase and regulates cell adhesion and spreading.</title>
        <authorList>
            <person name="Tu Y."/>
            <person name="Huang Y."/>
            <person name="Zhang Y."/>
            <person name="Hua Y."/>
            <person name="Wu C."/>
        </authorList>
    </citation>
    <scope>NUCLEOTIDE SEQUENCE [MRNA] (ISOFORM 1)</scope>
    <scope>FUNCTION</scope>
    <scope>IDENTIFICATION IN IPP COMPLEX</scope>
    <scope>SUBCELLULAR LOCATION</scope>
    <scope>TISSUE SPECIFICITY</scope>
    <scope>MUTAGENESIS OF PHE-271</scope>
</reference>
<reference key="3">
    <citation type="journal article" date="2004" name="Nat. Genet.">
        <title>Complete sequencing and characterization of 21,243 full-length human cDNAs.</title>
        <authorList>
            <person name="Ota T."/>
            <person name="Suzuki Y."/>
            <person name="Nishikawa T."/>
            <person name="Otsuki T."/>
            <person name="Sugiyama T."/>
            <person name="Irie R."/>
            <person name="Wakamatsu A."/>
            <person name="Hayashi K."/>
            <person name="Sato H."/>
            <person name="Nagai K."/>
            <person name="Kimura K."/>
            <person name="Makita H."/>
            <person name="Sekine M."/>
            <person name="Obayashi M."/>
            <person name="Nishi T."/>
            <person name="Shibahara T."/>
            <person name="Tanaka T."/>
            <person name="Ishii S."/>
            <person name="Yamamoto J."/>
            <person name="Saito K."/>
            <person name="Kawai Y."/>
            <person name="Isono Y."/>
            <person name="Nakamura Y."/>
            <person name="Nagahari K."/>
            <person name="Murakami K."/>
            <person name="Yasuda T."/>
            <person name="Iwayanagi T."/>
            <person name="Wagatsuma M."/>
            <person name="Shiratori A."/>
            <person name="Sudo H."/>
            <person name="Hosoiri T."/>
            <person name="Kaku Y."/>
            <person name="Kodaira H."/>
            <person name="Kondo H."/>
            <person name="Sugawara M."/>
            <person name="Takahashi M."/>
            <person name="Kanda K."/>
            <person name="Yokoi T."/>
            <person name="Furuya T."/>
            <person name="Kikkawa E."/>
            <person name="Omura Y."/>
            <person name="Abe K."/>
            <person name="Kamihara K."/>
            <person name="Katsuta N."/>
            <person name="Sato K."/>
            <person name="Tanikawa M."/>
            <person name="Yamazaki M."/>
            <person name="Ninomiya K."/>
            <person name="Ishibashi T."/>
            <person name="Yamashita H."/>
            <person name="Murakawa K."/>
            <person name="Fujimori K."/>
            <person name="Tanai H."/>
            <person name="Kimata M."/>
            <person name="Watanabe M."/>
            <person name="Hiraoka S."/>
            <person name="Chiba Y."/>
            <person name="Ishida S."/>
            <person name="Ono Y."/>
            <person name="Takiguchi S."/>
            <person name="Watanabe S."/>
            <person name="Yosida M."/>
            <person name="Hotuta T."/>
            <person name="Kusano J."/>
            <person name="Kanehori K."/>
            <person name="Takahashi-Fujii A."/>
            <person name="Hara H."/>
            <person name="Tanase T.-O."/>
            <person name="Nomura Y."/>
            <person name="Togiya S."/>
            <person name="Komai F."/>
            <person name="Hara R."/>
            <person name="Takeuchi K."/>
            <person name="Arita M."/>
            <person name="Imose N."/>
            <person name="Musashino K."/>
            <person name="Yuuki H."/>
            <person name="Oshima A."/>
            <person name="Sasaki N."/>
            <person name="Aotsuka S."/>
            <person name="Yoshikawa Y."/>
            <person name="Matsunawa H."/>
            <person name="Ichihara T."/>
            <person name="Shiohata N."/>
            <person name="Sano S."/>
            <person name="Moriya S."/>
            <person name="Momiyama H."/>
            <person name="Satoh N."/>
            <person name="Takami S."/>
            <person name="Terashima Y."/>
            <person name="Suzuki O."/>
            <person name="Nakagawa S."/>
            <person name="Senoh A."/>
            <person name="Mizoguchi H."/>
            <person name="Goto Y."/>
            <person name="Shimizu F."/>
            <person name="Wakebe H."/>
            <person name="Hishigaki H."/>
            <person name="Watanabe T."/>
            <person name="Sugiyama A."/>
            <person name="Takemoto M."/>
            <person name="Kawakami B."/>
            <person name="Yamazaki M."/>
            <person name="Watanabe K."/>
            <person name="Kumagai A."/>
            <person name="Itakura S."/>
            <person name="Fukuzumi Y."/>
            <person name="Fujimori Y."/>
            <person name="Komiyama M."/>
            <person name="Tashiro H."/>
            <person name="Tanigami A."/>
            <person name="Fujiwara T."/>
            <person name="Ono T."/>
            <person name="Yamada K."/>
            <person name="Fujii Y."/>
            <person name="Ozaki K."/>
            <person name="Hirao M."/>
            <person name="Ohmori Y."/>
            <person name="Kawabata A."/>
            <person name="Hikiji T."/>
            <person name="Kobatake N."/>
            <person name="Inagaki H."/>
            <person name="Ikema Y."/>
            <person name="Okamoto S."/>
            <person name="Okitani R."/>
            <person name="Kawakami T."/>
            <person name="Noguchi S."/>
            <person name="Itoh T."/>
            <person name="Shigeta K."/>
            <person name="Senba T."/>
            <person name="Matsumura K."/>
            <person name="Nakajima Y."/>
            <person name="Mizuno T."/>
            <person name="Morinaga M."/>
            <person name="Sasaki M."/>
            <person name="Togashi T."/>
            <person name="Oyama M."/>
            <person name="Hata H."/>
            <person name="Watanabe M."/>
            <person name="Komatsu T."/>
            <person name="Mizushima-Sugano J."/>
            <person name="Satoh T."/>
            <person name="Shirai Y."/>
            <person name="Takahashi Y."/>
            <person name="Nakagawa K."/>
            <person name="Okumura K."/>
            <person name="Nagase T."/>
            <person name="Nomura N."/>
            <person name="Kikuchi H."/>
            <person name="Masuho Y."/>
            <person name="Yamashita R."/>
            <person name="Nakai K."/>
            <person name="Yada T."/>
            <person name="Nakamura Y."/>
            <person name="Ohara O."/>
            <person name="Isogai T."/>
            <person name="Sugano S."/>
        </authorList>
    </citation>
    <scope>NUCLEOTIDE SEQUENCE [LARGE SCALE MRNA] (ISOFORMS 1 AND 2)</scope>
    <source>
        <tissue>Mammary gland</tissue>
    </source>
</reference>
<reference key="4">
    <citation type="journal article" date="2004" name="Genome Res.">
        <title>The status, quality, and expansion of the NIH full-length cDNA project: the Mammalian Gene Collection (MGC).</title>
        <authorList>
            <consortium name="The MGC Project Team"/>
        </authorList>
    </citation>
    <scope>NUCLEOTIDE SEQUENCE [LARGE SCALE MRNA] (ISOFORM 1)</scope>
    <source>
        <tissue>Brain</tissue>
    </source>
</reference>
<reference key="5">
    <citation type="journal article" date="2004" name="Biochem. J.">
        <title>Vectorial proteomics reveal targeting, phosphorylation and specific fragmentation of polymerase I and transcript release factor (PTRF) at the surface of caveolae in human adipocytes.</title>
        <authorList>
            <person name="Aboulaich N."/>
            <person name="Vainonen J.P."/>
            <person name="Stralfors P."/>
            <person name="Vener A.V."/>
        </authorList>
    </citation>
    <scope>PROTEIN SEQUENCE OF 118-131</scope>
    <source>
        <tissue>Adipocyte</tissue>
    </source>
</reference>
<reference key="6">
    <citation type="journal article" date="2000" name="J. Cell Biol.">
        <title>Actopaxin, a new focal adhesion protein that binds paxillin LD motifs and actin and regulates cell adhesion.</title>
        <authorList>
            <person name="Nikolopoulos S.N."/>
            <person name="Turner C.E."/>
        </authorList>
    </citation>
    <scope>FUNCTION</scope>
    <scope>TISSUE SPECIFICITY</scope>
    <scope>SUBCELLULAR LOCATION</scope>
</reference>
<reference key="7">
    <citation type="journal article" date="2001" name="Gene">
        <title>Genomic organization and expression profile of the parvin family of focal adhesion proteins in mice and humans.</title>
        <authorList>
            <person name="Korenbaum E."/>
            <person name="Olski T.M."/>
            <person name="Noegel A.A."/>
        </authorList>
    </citation>
    <scope>TISSUE SPECIFICITY</scope>
</reference>
<reference key="8">
    <citation type="journal article" date="2002" name="J. Cell Sci.">
        <title>Assembly of the PINCH-ILK-CH-ILKBP complex precedes and is essential for localization of each component to cell-matrix adhesion sites.</title>
        <authorList>
            <person name="Zhang Y."/>
            <person name="Chen K."/>
            <person name="Tu Y."/>
            <person name="Velyvis A."/>
            <person name="Yang Y."/>
            <person name="Qin J."/>
            <person name="Wu C."/>
        </authorList>
    </citation>
    <scope>IDENTIFICATION IN IPP COMPLEX</scope>
</reference>
<reference key="9">
    <citation type="journal article" date="2004" name="J. Biol. Chem.">
        <title>Distinct roles of two structurally closely related focal adhesion proteins, alpha-parvins and beta-parvins, in regulation of cell morphology and survival.</title>
        <authorList>
            <person name="Zhang Y."/>
            <person name="Chen K."/>
            <person name="Tu Y."/>
            <person name="Wu C."/>
        </authorList>
    </citation>
    <scope>FUNCTION</scope>
    <scope>INTERACTION WITH ILK</scope>
</reference>
<reference key="10">
    <citation type="journal article" date="2005" name="J. Biol. Chem.">
        <title>Actopaxin interacts with TESK1 to regulate cell spreading on fibronectin.</title>
        <authorList>
            <person name="LaLonde D.P."/>
            <person name="Brown M.C."/>
            <person name="Bouverat B.P."/>
            <person name="Turner C.E."/>
        </authorList>
    </citation>
    <scope>INTERACTION WITH ILK; PXN AND TESK1</scope>
    <scope>MUTAGENESIS OF SER-4 AND SER-8</scope>
</reference>
<reference key="11">
    <citation type="journal article" date="2006" name="Curr. Biol.">
        <title>CdGAP associates with actopaxin to regulate integrin-dependent changes in cell morphology and motility.</title>
        <authorList>
            <person name="LaLonde D.P."/>
            <person name="Grubinger M."/>
            <person name="Lamarche-Vane N."/>
            <person name="Turner C.E."/>
        </authorList>
    </citation>
    <scope>INTERACTION WITH ARHGAP31</scope>
</reference>
<reference key="12">
    <citation type="journal article" date="2008" name="Mol. Cell">
        <title>Kinase-selective enrichment enables quantitative phosphoproteomics of the kinome across the cell cycle.</title>
        <authorList>
            <person name="Daub H."/>
            <person name="Olsen J.V."/>
            <person name="Bairlein M."/>
            <person name="Gnad F."/>
            <person name="Oppermann F.S."/>
            <person name="Korner R."/>
            <person name="Greff Z."/>
            <person name="Keri G."/>
            <person name="Stemmann O."/>
            <person name="Mann M."/>
        </authorList>
    </citation>
    <scope>PHOSPHORYLATION [LARGE SCALE ANALYSIS] AT SER-28 AND SER-62</scope>
    <scope>IDENTIFICATION BY MASS SPECTROMETRY [LARGE SCALE ANALYSIS]</scope>
    <source>
        <tissue>Cervix carcinoma</tissue>
    </source>
</reference>
<reference key="13">
    <citation type="journal article" date="2008" name="Proc. Natl. Acad. Sci. U.S.A.">
        <title>A quantitative atlas of mitotic phosphorylation.</title>
        <authorList>
            <person name="Dephoure N."/>
            <person name="Zhou C."/>
            <person name="Villen J."/>
            <person name="Beausoleil S.A."/>
            <person name="Bakalarski C.E."/>
            <person name="Elledge S.J."/>
            <person name="Gygi S.P."/>
        </authorList>
    </citation>
    <scope>PHOSPHORYLATION [LARGE SCALE ANALYSIS] AT SER-14 AND SER-19</scope>
    <scope>IDENTIFICATION BY MASS SPECTROMETRY [LARGE SCALE ANALYSIS]</scope>
    <source>
        <tissue>Cervix carcinoma</tissue>
    </source>
</reference>
<reference key="14">
    <citation type="journal article" date="2010" name="Nature">
        <title>Functional genomic screen for modulators of ciliogenesis and cilium length.</title>
        <authorList>
            <person name="Kim J."/>
            <person name="Lee J.E."/>
            <person name="Heynen-Genel S."/>
            <person name="Suyama E."/>
            <person name="Ono K."/>
            <person name="Lee K."/>
            <person name="Ideker T."/>
            <person name="Aza-Blanc P."/>
            <person name="Gleeson J.G."/>
        </authorList>
    </citation>
    <scope>FUNCTION</scope>
</reference>
<reference key="15">
    <citation type="journal article" date="2011" name="BMC Syst. Biol.">
        <title>Initial characterization of the human central proteome.</title>
        <authorList>
            <person name="Burkard T.R."/>
            <person name="Planyavsky M."/>
            <person name="Kaupe I."/>
            <person name="Breitwieser F.P."/>
            <person name="Buerckstuemmer T."/>
            <person name="Bennett K.L."/>
            <person name="Superti-Furga G."/>
            <person name="Colinge J."/>
        </authorList>
    </citation>
    <scope>IDENTIFICATION BY MASS SPECTROMETRY [LARGE SCALE ANALYSIS]</scope>
</reference>
<reference key="16">
    <citation type="journal article" date="2011" name="Sci. Signal.">
        <title>System-wide temporal characterization of the proteome and phosphoproteome of human embryonic stem cell differentiation.</title>
        <authorList>
            <person name="Rigbolt K.T."/>
            <person name="Prokhorova T.A."/>
            <person name="Akimov V."/>
            <person name="Henningsen J."/>
            <person name="Johansen P.T."/>
            <person name="Kratchmarova I."/>
            <person name="Kassem M."/>
            <person name="Mann M."/>
            <person name="Olsen J.V."/>
            <person name="Blagoev B."/>
        </authorList>
    </citation>
    <scope>PHOSPHORYLATION [LARGE SCALE ANALYSIS] AT SER-19</scope>
    <scope>IDENTIFICATION BY MASS SPECTROMETRY [LARGE SCALE ANALYSIS]</scope>
</reference>
<reference key="17">
    <citation type="journal article" date="2012" name="FASEB J.">
        <title>LNK (SH2B3) is a key regulator of integrin signaling in endothelial cells and targets alpha-parvin to control cell adhesion and migration.</title>
        <authorList>
            <person name="Devalliere J."/>
            <person name="Chatelais M."/>
            <person name="Fitau J."/>
            <person name="Gerard N."/>
            <person name="Hulin P."/>
            <person name="Velazquez L."/>
            <person name="Turner C.E."/>
            <person name="Charreau B."/>
        </authorList>
    </citation>
    <scope>SUBCELLULAR LOCATION</scope>
</reference>
<reference key="18">
    <citation type="journal article" date="2013" name="J. Proteome Res.">
        <title>Toward a comprehensive characterization of a human cancer cell phosphoproteome.</title>
        <authorList>
            <person name="Zhou H."/>
            <person name="Di Palma S."/>
            <person name="Preisinger C."/>
            <person name="Peng M."/>
            <person name="Polat A.N."/>
            <person name="Heck A.J."/>
            <person name="Mohammed S."/>
        </authorList>
    </citation>
    <scope>PHOSPHORYLATION [LARGE SCALE ANALYSIS] AT SER-8; SER-14 AND SER-19</scope>
    <scope>IDENTIFICATION BY MASS SPECTROMETRY [LARGE SCALE ANALYSIS]</scope>
    <source>
        <tissue>Cervix carcinoma</tissue>
    </source>
</reference>
<reference key="19">
    <citation type="journal article" date="2014" name="J. Proteomics">
        <title>An enzyme assisted RP-RPLC approach for in-depth analysis of human liver phosphoproteome.</title>
        <authorList>
            <person name="Bian Y."/>
            <person name="Song C."/>
            <person name="Cheng K."/>
            <person name="Dong M."/>
            <person name="Wang F."/>
            <person name="Huang J."/>
            <person name="Sun D."/>
            <person name="Wang L."/>
            <person name="Ye M."/>
            <person name="Zou H."/>
        </authorList>
    </citation>
    <scope>PHOSPHORYLATION [LARGE SCALE ANALYSIS] AT SER-8 AND SER-19</scope>
    <scope>IDENTIFICATION BY MASS SPECTROMETRY [LARGE SCALE ANALYSIS]</scope>
    <source>
        <tissue>Liver</tissue>
    </source>
</reference>
<reference key="20">
    <citation type="journal article" date="2022" name="Proc. Natl. Acad. Sci. U.S.A.">
        <title>ATP allosterically stabilizes integrin-linked kinase for efficient force generation.</title>
        <authorList>
            <person name="Martin I.M."/>
            <person name="Nava M.M."/>
            <person name="Wickstroem S.A."/>
            <person name="Graeter F."/>
        </authorList>
    </citation>
    <scope>INTERACTION WITH ILK</scope>
    <scope>SUBCELLULAR LOCATION</scope>
</reference>
<reference key="21">
    <citation type="journal article" date="2008" name="J. Biol. Chem.">
        <title>The structure of alpha-parvin CH2-paxillin LD1 complex reveals a novel modular recognition for focal adhesion assembly.</title>
        <authorList>
            <person name="Wang X."/>
            <person name="Fukuda K."/>
            <person name="Byeon I.J."/>
            <person name="Velyvis A."/>
            <person name="Wu C."/>
            <person name="Gronenborn A."/>
            <person name="Qin J."/>
        </authorList>
    </citation>
    <scope>STRUCTURE BY NMR OF 244-372 IN COMPLEX WITH PXN</scope>
    <scope>INTERACTION WITH PXN</scope>
</reference>
<reference key="22">
    <citation type="journal article" date="2008" name="Structure">
        <title>Structural analysis of the interactions between paxillin LD motifs and alpha-parvin.</title>
        <authorList>
            <person name="Lorenz S."/>
            <person name="Vakonakis I."/>
            <person name="Lowe E.D."/>
            <person name="Campbell I.D."/>
            <person name="Noble M.E."/>
            <person name="Hoellerer M.K."/>
        </authorList>
    </citation>
    <scope>X-RAY CRYSTALLOGRAPHY (1.05 ANGSTROMS) OF 242-372 IN COMPLEX WITH PXN</scope>
    <scope>INTERACTION WITH PXN</scope>
</reference>
<reference key="23">
    <citation type="journal article" date="2009" name="Mol. Cell">
        <title>The pseudoactive site of ILK is essential for its binding to alpha-parvin and localization to focal adhesions.</title>
        <authorList>
            <person name="Fukuda K."/>
            <person name="Gupta S."/>
            <person name="Chen K."/>
            <person name="Wu C."/>
            <person name="Qin J."/>
        </authorList>
    </citation>
    <scope>X-RAY CRYSTALLOGRAPHY (1.8 ANGSTROMS) OF 248-372 IN COMPLEX WITH ILK</scope>
    <scope>INTERACTION WITH ILK</scope>
</reference>
<reference evidence="20" key="24">
    <citation type="journal article" date="2018" name="Nat. Commun.">
        <title>Non-catalytic signaling by pseudokinase ILK for regulating cell adhesion.</title>
        <authorList>
            <person name="Vaynberg J."/>
            <person name="Fukuda K."/>
            <person name="Lu F."/>
            <person name="Bialkowska K."/>
            <person name="Chen Y."/>
            <person name="Plow E.F."/>
            <person name="Qin J."/>
        </authorList>
    </citation>
    <scope>X-RAY CRYSTALLOGRAPHY (1.80 ANGSTROMS) OF 248-372 IN COMPLEX WITH ILK MUTANT TRP-207</scope>
    <scope>FUNCTION</scope>
    <scope>IDENTIFICATION IN IPP COMPLEX</scope>
    <scope>MUTAGENESIS OF 37-LEU--LYS-42</scope>
</reference>
<accession>Q9NVD7</accession>
<accession>Q96C85</accession>
<accession>Q9HA48</accession>
<evidence type="ECO:0000250" key="1"/>
<evidence type="ECO:0000250" key="2">
    <source>
        <dbReference type="UniProtKB" id="Q9EPC1"/>
    </source>
</evidence>
<evidence type="ECO:0000255" key="3">
    <source>
        <dbReference type="PROSITE-ProRule" id="PRU00044"/>
    </source>
</evidence>
<evidence type="ECO:0000256" key="4">
    <source>
        <dbReference type="SAM" id="MobiDB-lite"/>
    </source>
</evidence>
<evidence type="ECO:0000269" key="5">
    <source>
    </source>
</evidence>
<evidence type="ECO:0000269" key="6">
    <source>
    </source>
</evidence>
<evidence type="ECO:0000269" key="7">
    <source>
    </source>
</evidence>
<evidence type="ECO:0000269" key="8">
    <source>
    </source>
</evidence>
<evidence type="ECO:0000269" key="9">
    <source>
    </source>
</evidence>
<evidence type="ECO:0000269" key="10">
    <source>
    </source>
</evidence>
<evidence type="ECO:0000269" key="11">
    <source>
    </source>
</evidence>
<evidence type="ECO:0000269" key="12">
    <source>
    </source>
</evidence>
<evidence type="ECO:0000269" key="13">
    <source>
    </source>
</evidence>
<evidence type="ECO:0000269" key="14">
    <source>
    </source>
</evidence>
<evidence type="ECO:0000269" key="15">
    <source>
    </source>
</evidence>
<evidence type="ECO:0000269" key="16">
    <source>
    </source>
</evidence>
<evidence type="ECO:0000269" key="17">
    <source>
    </source>
</evidence>
<evidence type="ECO:0000303" key="18">
    <source>
    </source>
</evidence>
<evidence type="ECO:0000305" key="19"/>
<evidence type="ECO:0007744" key="20">
    <source>
        <dbReference type="PDB" id="6MIB"/>
    </source>
</evidence>
<evidence type="ECO:0007744" key="21">
    <source>
    </source>
</evidence>
<evidence type="ECO:0007744" key="22">
    <source>
    </source>
</evidence>
<evidence type="ECO:0007744" key="23">
    <source>
    </source>
</evidence>
<evidence type="ECO:0007744" key="24">
    <source>
    </source>
</evidence>
<evidence type="ECO:0007744" key="25">
    <source>
    </source>
</evidence>
<evidence type="ECO:0007829" key="26">
    <source>
        <dbReference type="PDB" id="2VZC"/>
    </source>
</evidence>
<evidence type="ECO:0007829" key="27">
    <source>
        <dbReference type="PDB" id="2VZG"/>
    </source>
</evidence>
<dbReference type="EMBL" id="AF237771">
    <property type="protein sequence ID" value="AAG27173.1"/>
    <property type="molecule type" value="mRNA"/>
</dbReference>
<dbReference type="EMBL" id="AF325830">
    <property type="protein sequence ID" value="AAK49911.1"/>
    <property type="molecule type" value="mRNA"/>
</dbReference>
<dbReference type="EMBL" id="AK001655">
    <property type="protein sequence ID" value="BAA91815.1"/>
    <property type="molecule type" value="mRNA"/>
</dbReference>
<dbReference type="EMBL" id="AK022316">
    <property type="protein sequence ID" value="BAB14009.1"/>
    <property type="molecule type" value="mRNA"/>
</dbReference>
<dbReference type="EMBL" id="BC016713">
    <property type="protein sequence ID" value="AAH16713.1"/>
    <property type="molecule type" value="mRNA"/>
</dbReference>
<dbReference type="EMBL" id="BC014535">
    <property type="protein sequence ID" value="AAH14535.1"/>
    <property type="molecule type" value="mRNA"/>
</dbReference>
<dbReference type="CCDS" id="CCDS44541.3">
    <molecule id="Q9NVD7-1"/>
</dbReference>
<dbReference type="RefSeq" id="NP_060692.3">
    <molecule id="Q9NVD7-1"/>
    <property type="nucleotide sequence ID" value="NM_018222.5"/>
</dbReference>
<dbReference type="PDB" id="2K2R">
    <property type="method" value="NMR"/>
    <property type="chains" value="A=244-372"/>
</dbReference>
<dbReference type="PDB" id="2VZC">
    <property type="method" value="X-ray"/>
    <property type="resolution" value="1.05 A"/>
    <property type="chains" value="A/B=242-372"/>
</dbReference>
<dbReference type="PDB" id="2VZD">
    <property type="method" value="X-ray"/>
    <property type="resolution" value="2.10 A"/>
    <property type="chains" value="A/B=242-372"/>
</dbReference>
<dbReference type="PDB" id="2VZG">
    <property type="method" value="X-ray"/>
    <property type="resolution" value="1.80 A"/>
    <property type="chains" value="B=242-372"/>
</dbReference>
<dbReference type="PDB" id="2VZI">
    <property type="method" value="X-ray"/>
    <property type="resolution" value="2.20 A"/>
    <property type="chains" value="B=242-372"/>
</dbReference>
<dbReference type="PDB" id="3KMU">
    <property type="method" value="X-ray"/>
    <property type="resolution" value="1.80 A"/>
    <property type="chains" value="B=248-372"/>
</dbReference>
<dbReference type="PDB" id="3KMW">
    <property type="method" value="X-ray"/>
    <property type="resolution" value="2.00 A"/>
    <property type="chains" value="B=248-372"/>
</dbReference>
<dbReference type="PDB" id="3REP">
    <property type="method" value="X-ray"/>
    <property type="resolution" value="1.80 A"/>
    <property type="chains" value="B=248-372"/>
</dbReference>
<dbReference type="PDB" id="6MIB">
    <property type="method" value="X-ray"/>
    <property type="resolution" value="1.80 A"/>
    <property type="chains" value="B=248-372"/>
</dbReference>
<dbReference type="PDBsum" id="2K2R"/>
<dbReference type="PDBsum" id="2VZC"/>
<dbReference type="PDBsum" id="2VZD"/>
<dbReference type="PDBsum" id="2VZG"/>
<dbReference type="PDBsum" id="2VZI"/>
<dbReference type="PDBsum" id="3KMU"/>
<dbReference type="PDBsum" id="3KMW"/>
<dbReference type="PDBsum" id="3REP"/>
<dbReference type="PDBsum" id="6MIB"/>
<dbReference type="BMRB" id="Q9NVD7"/>
<dbReference type="SMR" id="Q9NVD7"/>
<dbReference type="BioGRID" id="120860">
    <property type="interactions" value="88"/>
</dbReference>
<dbReference type="ComplexPortal" id="CPX-10304">
    <property type="entry name" value="ILK-PINCH-Parvin complex, LIMS1-PARVA variant"/>
</dbReference>
<dbReference type="ComplexPortal" id="CPX-10313">
    <property type="entry name" value="ILK-PINCH-Parvin complex, LIMS2-PARVA variant"/>
</dbReference>
<dbReference type="CORUM" id="Q9NVD7"/>
<dbReference type="FunCoup" id="Q9NVD7">
    <property type="interactions" value="1268"/>
</dbReference>
<dbReference type="IntAct" id="Q9NVD7">
    <property type="interactions" value="39"/>
</dbReference>
<dbReference type="MINT" id="Q9NVD7"/>
<dbReference type="STRING" id="9606.ENSP00000334008"/>
<dbReference type="iPTMnet" id="Q9NVD7"/>
<dbReference type="PhosphoSitePlus" id="Q9NVD7"/>
<dbReference type="BioMuta" id="PARVA"/>
<dbReference type="DMDM" id="20139236"/>
<dbReference type="jPOST" id="Q9NVD7"/>
<dbReference type="MassIVE" id="Q9NVD7"/>
<dbReference type="PaxDb" id="9606-ENSP00000334008"/>
<dbReference type="PeptideAtlas" id="Q9NVD7"/>
<dbReference type="ProteomicsDB" id="82782">
    <molecule id="Q9NVD7-1"/>
</dbReference>
<dbReference type="ProteomicsDB" id="82783">
    <molecule id="Q9NVD7-2"/>
</dbReference>
<dbReference type="Pumba" id="Q9NVD7"/>
<dbReference type="Antibodypedia" id="993">
    <property type="antibodies" value="471 antibodies from 32 providers"/>
</dbReference>
<dbReference type="DNASU" id="55742"/>
<dbReference type="Ensembl" id="ENST00000334956.15">
    <molecule id="Q9NVD7-1"/>
    <property type="protein sequence ID" value="ENSP00000334008.9"/>
    <property type="gene ID" value="ENSG00000197702.14"/>
</dbReference>
<dbReference type="GeneID" id="55742"/>
<dbReference type="KEGG" id="hsa:55742"/>
<dbReference type="MANE-Select" id="ENST00000334956.15">
    <property type="protein sequence ID" value="ENSP00000334008.9"/>
    <property type="RefSeq nucleotide sequence ID" value="NM_018222.5"/>
    <property type="RefSeq protein sequence ID" value="NP_060692.3"/>
</dbReference>
<dbReference type="AGR" id="HGNC:14652"/>
<dbReference type="CTD" id="55742"/>
<dbReference type="DisGeNET" id="55742"/>
<dbReference type="GeneCards" id="PARVA"/>
<dbReference type="HGNC" id="HGNC:14652">
    <property type="gene designation" value="PARVA"/>
</dbReference>
<dbReference type="HPA" id="ENSG00000197702">
    <property type="expression patterns" value="Low tissue specificity"/>
</dbReference>
<dbReference type="MIM" id="608120">
    <property type="type" value="gene"/>
</dbReference>
<dbReference type="neXtProt" id="NX_Q9NVD7"/>
<dbReference type="OpenTargets" id="ENSG00000197702"/>
<dbReference type="PharmGKB" id="PA32950"/>
<dbReference type="VEuPathDB" id="HostDB:ENSG00000197702"/>
<dbReference type="eggNOG" id="KOG3631">
    <property type="taxonomic scope" value="Eukaryota"/>
</dbReference>
<dbReference type="GeneTree" id="ENSGT00950000183194"/>
<dbReference type="InParanoid" id="Q9NVD7"/>
<dbReference type="OMA" id="VDLLIYW"/>
<dbReference type="OrthoDB" id="2099265at2759"/>
<dbReference type="PAN-GO" id="Q9NVD7">
    <property type="GO annotations" value="8 GO annotations based on evolutionary models"/>
</dbReference>
<dbReference type="PhylomeDB" id="Q9NVD7"/>
<dbReference type="PathwayCommons" id="Q9NVD7"/>
<dbReference type="Reactome" id="R-HSA-446343">
    <property type="pathway name" value="Localization of the PINCH-ILK-PARVIN complex to focal adhesions"/>
</dbReference>
<dbReference type="Reactome" id="R-HSA-446353">
    <property type="pathway name" value="Cell-extracellular matrix interactions"/>
</dbReference>
<dbReference type="Reactome" id="R-HSA-446388">
    <property type="pathway name" value="Regulation of cytoskeletal remodeling and cell spreading by IPP complex components"/>
</dbReference>
<dbReference type="SignaLink" id="Q9NVD7"/>
<dbReference type="SIGNOR" id="Q9NVD7"/>
<dbReference type="BioGRID-ORCS" id="55742">
    <property type="hits" value="38 hits in 1143 CRISPR screens"/>
</dbReference>
<dbReference type="ChiTaRS" id="PARVA">
    <property type="organism name" value="human"/>
</dbReference>
<dbReference type="EvolutionaryTrace" id="Q9NVD7"/>
<dbReference type="GeneWiki" id="PARVA"/>
<dbReference type="GenomeRNAi" id="55742"/>
<dbReference type="Pharos" id="Q9NVD7">
    <property type="development level" value="Tbio"/>
</dbReference>
<dbReference type="PRO" id="PR:Q9NVD7"/>
<dbReference type="Proteomes" id="UP000005640">
    <property type="component" value="Chromosome 11"/>
</dbReference>
<dbReference type="RNAct" id="Q9NVD7">
    <property type="molecule type" value="protein"/>
</dbReference>
<dbReference type="Bgee" id="ENSG00000197702">
    <property type="expression patterns" value="Expressed in smooth muscle tissue and 210 other cell types or tissues"/>
</dbReference>
<dbReference type="ExpressionAtlas" id="Q9NVD7">
    <property type="expression patterns" value="baseline and differential"/>
</dbReference>
<dbReference type="GO" id="GO:0015629">
    <property type="term" value="C:actin cytoskeleton"/>
    <property type="evidence" value="ECO:0000314"/>
    <property type="project" value="HPA"/>
</dbReference>
<dbReference type="GO" id="GO:0005737">
    <property type="term" value="C:cytoplasm"/>
    <property type="evidence" value="ECO:0000318"/>
    <property type="project" value="GO_Central"/>
</dbReference>
<dbReference type="GO" id="GO:0005829">
    <property type="term" value="C:cytosol"/>
    <property type="evidence" value="ECO:0000314"/>
    <property type="project" value="HPA"/>
</dbReference>
<dbReference type="GO" id="GO:0005925">
    <property type="term" value="C:focal adhesion"/>
    <property type="evidence" value="ECO:0000314"/>
    <property type="project" value="HPA"/>
</dbReference>
<dbReference type="GO" id="GO:0005886">
    <property type="term" value="C:plasma membrane"/>
    <property type="evidence" value="ECO:0007669"/>
    <property type="project" value="UniProtKB-SubCell"/>
</dbReference>
<dbReference type="GO" id="GO:0030018">
    <property type="term" value="C:Z disc"/>
    <property type="evidence" value="ECO:0007669"/>
    <property type="project" value="UniProtKB-SubCell"/>
</dbReference>
<dbReference type="GO" id="GO:0003779">
    <property type="term" value="F:actin binding"/>
    <property type="evidence" value="ECO:0000318"/>
    <property type="project" value="GO_Central"/>
</dbReference>
<dbReference type="GO" id="GO:0045296">
    <property type="term" value="F:cadherin binding"/>
    <property type="evidence" value="ECO:0007005"/>
    <property type="project" value="BHF-UCL"/>
</dbReference>
<dbReference type="GO" id="GO:0004860">
    <property type="term" value="F:protein kinase inhibitor activity"/>
    <property type="evidence" value="ECO:0000315"/>
    <property type="project" value="UniProtKB"/>
</dbReference>
<dbReference type="GO" id="GO:0030036">
    <property type="term" value="P:actin cytoskeleton organization"/>
    <property type="evidence" value="ECO:0000318"/>
    <property type="project" value="GO_Central"/>
</dbReference>
<dbReference type="GO" id="GO:0070252">
    <property type="term" value="P:actin-mediated cell contraction"/>
    <property type="evidence" value="ECO:0000250"/>
    <property type="project" value="UniProtKB"/>
</dbReference>
<dbReference type="GO" id="GO:0060271">
    <property type="term" value="P:cilium assembly"/>
    <property type="evidence" value="ECO:0000315"/>
    <property type="project" value="UniProtKB"/>
</dbReference>
<dbReference type="GO" id="GO:0007163">
    <property type="term" value="P:establishment or maintenance of cell polarity"/>
    <property type="evidence" value="ECO:0000250"/>
    <property type="project" value="UniProtKB"/>
</dbReference>
<dbReference type="GO" id="GO:0071963">
    <property type="term" value="P:establishment or maintenance of cell polarity regulating cell shape"/>
    <property type="evidence" value="ECO:0000318"/>
    <property type="project" value="GO_Central"/>
</dbReference>
<dbReference type="GO" id="GO:0034113">
    <property type="term" value="P:heterotypic cell-cell adhesion"/>
    <property type="evidence" value="ECO:0000250"/>
    <property type="project" value="UniProtKB"/>
</dbReference>
<dbReference type="GO" id="GO:0003148">
    <property type="term" value="P:outflow tract septum morphogenesis"/>
    <property type="evidence" value="ECO:0000250"/>
    <property type="project" value="UniProtKB"/>
</dbReference>
<dbReference type="GO" id="GO:0050821">
    <property type="term" value="P:protein stabilization"/>
    <property type="evidence" value="ECO:0000304"/>
    <property type="project" value="ARUK-UCL"/>
</dbReference>
<dbReference type="GO" id="GO:0071670">
    <property type="term" value="P:smooth muscle cell chemotaxis"/>
    <property type="evidence" value="ECO:0000250"/>
    <property type="project" value="UniProtKB"/>
</dbReference>
<dbReference type="GO" id="GO:0002040">
    <property type="term" value="P:sprouting angiogenesis"/>
    <property type="evidence" value="ECO:0000250"/>
    <property type="project" value="UniProtKB"/>
</dbReference>
<dbReference type="GO" id="GO:0034446">
    <property type="term" value="P:substrate adhesion-dependent cell spreading"/>
    <property type="evidence" value="ECO:0000315"/>
    <property type="project" value="UniProtKB"/>
</dbReference>
<dbReference type="CDD" id="cd21335">
    <property type="entry name" value="CH_PARVA_rpt1"/>
    <property type="match status" value="1"/>
</dbReference>
<dbReference type="CDD" id="cd21337">
    <property type="entry name" value="CH_PARVA_rpt2"/>
    <property type="match status" value="1"/>
</dbReference>
<dbReference type="FunFam" id="1.10.418.10:FF:000015">
    <property type="entry name" value="Parvin beta"/>
    <property type="match status" value="1"/>
</dbReference>
<dbReference type="FunFam" id="1.10.418.10:FF:000011">
    <property type="entry name" value="Parvin, beta"/>
    <property type="match status" value="1"/>
</dbReference>
<dbReference type="Gene3D" id="1.10.418.10">
    <property type="entry name" value="Calponin-like domain"/>
    <property type="match status" value="2"/>
</dbReference>
<dbReference type="InterPro" id="IPR001715">
    <property type="entry name" value="CH_dom"/>
</dbReference>
<dbReference type="InterPro" id="IPR036872">
    <property type="entry name" value="CH_dom_sf"/>
</dbReference>
<dbReference type="InterPro" id="IPR028433">
    <property type="entry name" value="Parvin"/>
</dbReference>
<dbReference type="PANTHER" id="PTHR12114:SF6">
    <property type="entry name" value="ALPHA-PARVIN"/>
    <property type="match status" value="1"/>
</dbReference>
<dbReference type="PANTHER" id="PTHR12114">
    <property type="entry name" value="PARVIN"/>
    <property type="match status" value="1"/>
</dbReference>
<dbReference type="Pfam" id="PF00307">
    <property type="entry name" value="CH"/>
    <property type="match status" value="2"/>
</dbReference>
<dbReference type="PIRSF" id="PIRSF039131">
    <property type="entry name" value="Parvin"/>
    <property type="match status" value="1"/>
</dbReference>
<dbReference type="SMART" id="SM00033">
    <property type="entry name" value="CH"/>
    <property type="match status" value="2"/>
</dbReference>
<dbReference type="SUPFAM" id="SSF47576">
    <property type="entry name" value="Calponin-homology domain, CH-domain"/>
    <property type="match status" value="1"/>
</dbReference>
<dbReference type="PROSITE" id="PS50021">
    <property type="entry name" value="CH"/>
    <property type="match status" value="2"/>
</dbReference>
<gene>
    <name type="primary">PARVA</name>
    <name type="synonym">MXRA2</name>
</gene>
<proteinExistence type="evidence at protein level"/>
<protein>
    <recommendedName>
        <fullName>Alpha-parvin</fullName>
    </recommendedName>
    <alternativeName>
        <fullName>Actopaxin</fullName>
    </alternativeName>
    <alternativeName>
        <fullName>CH-ILKBP</fullName>
    </alternativeName>
    <alternativeName>
        <fullName>Calponin-like integrin-linked kinase-binding protein</fullName>
    </alternativeName>
    <alternativeName>
        <fullName>Matrix-remodeling-associated protein 2</fullName>
    </alternativeName>
</protein>
<sequence length="372" mass="42244">MATSPQKSPSVPKSPTPKSPPSRKKDDSFLGKLGGTLARRKKAKEVSELQEEGMNAINLPLSPIPFELDPEDTMLEENEVRTMVDPNSRSDPKLQELMKVLIDWINDVLVGERIIVKDLAEDLYDGQVLQKLFEKLESEKLNVAEVTQSEIAQKQKLQTVLEKINETLKLPPRSIKWNVDSVHAKSLVAILHLLVALSQYFRAPIRLPDHVSIQVVVVQKREGILQSRQIQEEITGNTEALSGRHERDAFDTLFDHAPDKLNVVKKTLITFVNKHLNKLNLEVTELETQFADGVYLVLLMGLLEGYFVPLHSFFLTPDSFEQKVLNVSFAFELMQDGGLEKPKPRPEDIVNCDLKSTLRVLYNLFTKYRNVE</sequence>
<organism>
    <name type="scientific">Homo sapiens</name>
    <name type="common">Human</name>
    <dbReference type="NCBI Taxonomy" id="9606"/>
    <lineage>
        <taxon>Eukaryota</taxon>
        <taxon>Metazoa</taxon>
        <taxon>Chordata</taxon>
        <taxon>Craniata</taxon>
        <taxon>Vertebrata</taxon>
        <taxon>Euteleostomi</taxon>
        <taxon>Mammalia</taxon>
        <taxon>Eutheria</taxon>
        <taxon>Euarchontoglires</taxon>
        <taxon>Primates</taxon>
        <taxon>Haplorrhini</taxon>
        <taxon>Catarrhini</taxon>
        <taxon>Hominidae</taxon>
        <taxon>Homo</taxon>
    </lineage>
</organism>
<comment type="function">
    <text evidence="1 5 6 9 15 16">Plays a role in sarcomere organization and in smooth muscle cell contraction. Required for normal development of the embryonic cardiovascular system, and for normal septation of the heart outflow tract. Plays a role in sprouting angiogenesis and is required for normal adhesion of vascular smooth muscle cells to endothelial cells during blood vessel development (By similarity). Plays a role in the reorganization of the actin cytoskeleton, formation of lamellipodia and ciliogenesis. Plays a role in the establishment of cell polarity, cell adhesion, cell spreading, and directed cell migration. Within the IPP (ILK-PINCH-PARVIN) complex, binds to F-actin, promoting F-actin bundling, a process required to generate force for actin cytoskeleton reorganization and subsequent dynamic cell adhesion events such as cell spreading and migration (PubMed:30367047).</text>
</comment>
<comment type="subunit">
    <text evidence="2 6 8 9 10 11 12 13 14 16 17">Component of the heterotrimeric IPP (ILK-PINCH-PARVIN) complex composed of ILK, LIMS1/PINCH and PARVA; the complex binds to F-actin via the C-terminal tail of LIMS1 and the N-terminal region of PARVA, promoting F-actin filament bundling (PubMed:11331308, PubMed:12432066, PubMed:15284246, PubMed:15817463, PubMed:20005845, PubMed:30367047, PubMed:35259013). Formation of the IPP complex is dependent on protein kinase C and precedes integrin-mediated cell adhesion and spreading (PubMed:12432066). Interacts with TGFB1I1 (By similarity). Interacts with ARHGAP31 (PubMed:16860736). Interacts with the actin cytoskeleton (PubMed:11331308). Interacts (via C-terminus) with TESK1 (via C-terminus); the interaction inhibits TESK1 kinase activity (PubMed:15817463). Interacts with PXN/PAXILLIN (via LD motif 4) (PubMed:15817463, PubMed:18508764, PubMed:18940607).</text>
</comment>
<comment type="interaction">
    <interactant intactId="EBI-747655">
        <id>Q9NVD7</id>
    </interactant>
    <interactant intactId="EBI-946046">
        <id>P54252</id>
        <label>ATXN3</label>
    </interactant>
    <organismsDiffer>false</organismsDiffer>
    <experiments>9</experiments>
</comment>
<comment type="interaction">
    <interactant intactId="EBI-747655">
        <id>Q9NVD7</id>
    </interactant>
    <interactant intactId="EBI-744099">
        <id>Q9H0I2</id>
        <label>ENKD1</label>
    </interactant>
    <organismsDiffer>false</organismsDiffer>
    <experiments>3</experiments>
</comment>
<comment type="interaction">
    <interactant intactId="EBI-747655">
        <id>Q9NVD7</id>
    </interactant>
    <interactant intactId="EBI-747644">
        <id>Q13418</id>
        <label>ILK</label>
    </interactant>
    <organismsDiffer>false</organismsDiffer>
    <experiments>26</experiments>
</comment>
<comment type="interaction">
    <interactant intactId="EBI-747655">
        <id>Q9NVD7</id>
    </interactant>
    <interactant intactId="EBI-1220583">
        <id>Q96EN8</id>
        <label>MOCOS</label>
    </interactant>
    <organismsDiffer>false</organismsDiffer>
    <experiments>6</experiments>
</comment>
<comment type="interaction">
    <interactant intactId="EBI-747655">
        <id>Q9NVD7</id>
    </interactant>
    <interactant intactId="EBI-6690138">
        <id>O55222</id>
        <label>Ilk</label>
    </interactant>
    <organismsDiffer>true</organismsDiffer>
    <experiments>2</experiments>
</comment>
<comment type="interaction">
    <interactant intactId="EBI-15735104">
        <id>Q9NVD7-1</id>
    </interactant>
    <interactant intactId="EBI-11954250">
        <id>P49023-2</id>
        <label>PXN</label>
    </interactant>
    <organismsDiffer>false</organismsDiffer>
    <experiments>3</experiments>
</comment>
<comment type="subcellular location">
    <subcellularLocation>
        <location evidence="6 17">Cell junction</location>
        <location evidence="6 17">Focal adhesion</location>
    </subcellularLocation>
    <subcellularLocation>
        <location>Cell membrane</location>
        <topology>Peripheral membrane protein</topology>
        <orientation>Cytoplasmic side</orientation>
    </subcellularLocation>
    <subcellularLocation>
        <location>Cytoplasm</location>
        <location>Cytoskeleton</location>
    </subcellularLocation>
    <subcellularLocation>
        <location evidence="1">Cytoplasm</location>
        <location evidence="1">Myofibril</location>
        <location evidence="1">Sarcomere</location>
        <location evidence="1">Z line</location>
    </subcellularLocation>
</comment>
<comment type="alternative products">
    <event type="alternative splicing"/>
    <isoform>
        <id>Q9NVD7-1</id>
        <name>1</name>
        <sequence type="displayed"/>
    </isoform>
    <isoform>
        <id>Q9NVD7-2</id>
        <name>2</name>
        <sequence type="described" ref="VSP_008884 VSP_008885"/>
    </isoform>
</comment>
<comment type="tissue specificity">
    <text evidence="5 6 7">Widely expressed, with highest levels in heart, skeletal muscle, kidney and liver.</text>
</comment>
<comment type="similarity">
    <text evidence="19">Belongs to the parvin family.</text>
</comment>
<feature type="initiator methionine" description="Removed" evidence="2">
    <location>
        <position position="1"/>
    </location>
</feature>
<feature type="chain" id="PRO_0000121580" description="Alpha-parvin">
    <location>
        <begin position="2"/>
        <end position="372"/>
    </location>
</feature>
<feature type="domain" description="Calponin-homology (CH) 1" evidence="3">
    <location>
        <begin position="95"/>
        <end position="202"/>
    </location>
</feature>
<feature type="domain" description="Calponin-homology (CH) 2" evidence="3">
    <location>
        <begin position="262"/>
        <end position="369"/>
    </location>
</feature>
<feature type="region of interest" description="Disordered" evidence="4">
    <location>
        <begin position="1"/>
        <end position="45"/>
    </location>
</feature>
<feature type="region of interest" description="Interaction with ARHGAP31" evidence="11">
    <location>
        <begin position="21"/>
        <end position="25"/>
    </location>
</feature>
<feature type="region of interest" description="Required for interaction with TESK1 and ILK" evidence="10">
    <location>
        <begin position="223"/>
        <end position="372"/>
    </location>
</feature>
<feature type="compositionally biased region" description="Low complexity" evidence="4">
    <location>
        <begin position="1"/>
        <end position="11"/>
    </location>
</feature>
<feature type="modified residue" description="N-acetylalanine" evidence="2">
    <location>
        <position position="2"/>
    </location>
</feature>
<feature type="modified residue" description="Phosphoserine" evidence="24 25">
    <location>
        <position position="8"/>
    </location>
</feature>
<feature type="modified residue" description="Phosphoserine" evidence="21 24">
    <location>
        <position position="14"/>
    </location>
</feature>
<feature type="modified residue" description="Phosphoserine" evidence="21 23 24 25">
    <location>
        <position position="19"/>
    </location>
</feature>
<feature type="modified residue" description="Phosphoserine" evidence="22">
    <location>
        <position position="28"/>
    </location>
</feature>
<feature type="modified residue" description="Phosphoserine" evidence="22">
    <location>
        <position position="62"/>
    </location>
</feature>
<feature type="splice variant" id="VSP_008884" description="In isoform 2." evidence="18">
    <original>EKLESEKLNVAEVTQSEIAQKQKLQTVLEKINETLKLPPRSIKWNVDSV</original>
    <variation>GRRVECCNGCVFNCRWLDHLLVARRSYSQFTVAYLEMDYKCVEHGITAQ</variation>
    <location>
        <begin position="134"/>
        <end position="182"/>
    </location>
</feature>
<feature type="splice variant" id="VSP_008885" description="In isoform 2." evidence="18">
    <location>
        <begin position="183"/>
        <end position="372"/>
    </location>
</feature>
<feature type="mutagenesis site" description="Loss of interaction with TESK1, however no effect on interaction with ILK; when associated with D-8." evidence="10">
    <original>S</original>
    <variation>D</variation>
    <location>
        <position position="4"/>
    </location>
</feature>
<feature type="mutagenesis site" description="Loss of interaction with TESK1, however no effect on interaction with ILK; when associated with D-4." evidence="10">
    <original>S</original>
    <variation>D</variation>
    <location>
        <position position="8"/>
    </location>
</feature>
<feature type="mutagenesis site" description="Reduced actin binding." evidence="16">
    <original>LARRKK</original>
    <variation>AAAAAA</variation>
    <location>
        <begin position="37"/>
        <end position="42"/>
    </location>
</feature>
<feature type="mutagenesis site" description="Loss of interaction with ILK. Loss of localization to focal adhesions." evidence="6">
    <original>F</original>
    <variation>D</variation>
    <location>
        <position position="271"/>
    </location>
</feature>
<feature type="sequence conflict" description="In Ref. 4; AAH14535." evidence="19" ref="4">
    <original>V</original>
    <variation>A</variation>
    <location>
        <position position="11"/>
    </location>
</feature>
<feature type="helix" evidence="26">
    <location>
        <begin position="249"/>
        <end position="256"/>
    </location>
</feature>
<feature type="helix" evidence="26">
    <location>
        <begin position="258"/>
        <end position="276"/>
    </location>
</feature>
<feature type="helix" evidence="26">
    <location>
        <begin position="277"/>
        <end position="279"/>
    </location>
</feature>
<feature type="turn" evidence="26">
    <location>
        <begin position="286"/>
        <end position="292"/>
    </location>
</feature>
<feature type="helix" evidence="26">
    <location>
        <begin position="294"/>
        <end position="303"/>
    </location>
</feature>
<feature type="helix" evidence="27">
    <location>
        <begin position="310"/>
        <end position="312"/>
    </location>
</feature>
<feature type="helix" evidence="26">
    <location>
        <begin position="320"/>
        <end position="336"/>
    </location>
</feature>
<feature type="helix" evidence="26">
    <location>
        <begin position="346"/>
        <end position="350"/>
    </location>
</feature>
<feature type="helix" evidence="26">
    <location>
        <begin position="354"/>
        <end position="368"/>
    </location>
</feature>